<gene>
    <name evidence="1" type="primary">leuC</name>
    <name type="ordered locus">PMT_1844</name>
</gene>
<name>LEUC_PROMM</name>
<proteinExistence type="inferred from homology"/>
<dbReference type="EC" id="4.2.1.33" evidence="1"/>
<dbReference type="EMBL" id="BX548175">
    <property type="protein sequence ID" value="CAE22019.1"/>
    <property type="molecule type" value="Genomic_DNA"/>
</dbReference>
<dbReference type="RefSeq" id="WP_011131211.1">
    <property type="nucleotide sequence ID" value="NC_005071.1"/>
</dbReference>
<dbReference type="SMR" id="Q7V4U5"/>
<dbReference type="KEGG" id="pmt:PMT_1844"/>
<dbReference type="eggNOG" id="COG0065">
    <property type="taxonomic scope" value="Bacteria"/>
</dbReference>
<dbReference type="HOGENOM" id="CLU_006714_3_4_3"/>
<dbReference type="OrthoDB" id="9802769at2"/>
<dbReference type="UniPathway" id="UPA00048">
    <property type="reaction ID" value="UER00071"/>
</dbReference>
<dbReference type="Proteomes" id="UP000001423">
    <property type="component" value="Chromosome"/>
</dbReference>
<dbReference type="GO" id="GO:0003861">
    <property type="term" value="F:3-isopropylmalate dehydratase activity"/>
    <property type="evidence" value="ECO:0007669"/>
    <property type="project" value="UniProtKB-UniRule"/>
</dbReference>
<dbReference type="GO" id="GO:0051539">
    <property type="term" value="F:4 iron, 4 sulfur cluster binding"/>
    <property type="evidence" value="ECO:0007669"/>
    <property type="project" value="UniProtKB-KW"/>
</dbReference>
<dbReference type="GO" id="GO:0046872">
    <property type="term" value="F:metal ion binding"/>
    <property type="evidence" value="ECO:0007669"/>
    <property type="project" value="UniProtKB-KW"/>
</dbReference>
<dbReference type="GO" id="GO:0009098">
    <property type="term" value="P:L-leucine biosynthetic process"/>
    <property type="evidence" value="ECO:0007669"/>
    <property type="project" value="UniProtKB-UniRule"/>
</dbReference>
<dbReference type="CDD" id="cd01583">
    <property type="entry name" value="IPMI"/>
    <property type="match status" value="1"/>
</dbReference>
<dbReference type="Gene3D" id="3.30.499.10">
    <property type="entry name" value="Aconitase, domain 3"/>
    <property type="match status" value="2"/>
</dbReference>
<dbReference type="HAMAP" id="MF_01026">
    <property type="entry name" value="LeuC_type1"/>
    <property type="match status" value="1"/>
</dbReference>
<dbReference type="InterPro" id="IPR004430">
    <property type="entry name" value="3-IsopropMal_deHydase_lsu"/>
</dbReference>
<dbReference type="InterPro" id="IPR015931">
    <property type="entry name" value="Acnase/IPM_dHydase_lsu_aba_1/3"/>
</dbReference>
<dbReference type="InterPro" id="IPR001030">
    <property type="entry name" value="Acoase/IPM_deHydtase_lsu_aba"/>
</dbReference>
<dbReference type="InterPro" id="IPR018136">
    <property type="entry name" value="Aconitase_4Fe-4S_BS"/>
</dbReference>
<dbReference type="InterPro" id="IPR036008">
    <property type="entry name" value="Aconitase_4Fe-4S_dom"/>
</dbReference>
<dbReference type="InterPro" id="IPR050067">
    <property type="entry name" value="IPM_dehydratase_rel_enz"/>
</dbReference>
<dbReference type="InterPro" id="IPR033941">
    <property type="entry name" value="IPMI_cat"/>
</dbReference>
<dbReference type="NCBIfam" id="TIGR00170">
    <property type="entry name" value="leuC"/>
    <property type="match status" value="1"/>
</dbReference>
<dbReference type="NCBIfam" id="NF004016">
    <property type="entry name" value="PRK05478.1"/>
    <property type="match status" value="1"/>
</dbReference>
<dbReference type="NCBIfam" id="NF009116">
    <property type="entry name" value="PRK12466.1"/>
    <property type="match status" value="1"/>
</dbReference>
<dbReference type="PANTHER" id="PTHR43822:SF9">
    <property type="entry name" value="3-ISOPROPYLMALATE DEHYDRATASE"/>
    <property type="match status" value="1"/>
</dbReference>
<dbReference type="PANTHER" id="PTHR43822">
    <property type="entry name" value="HOMOACONITASE, MITOCHONDRIAL-RELATED"/>
    <property type="match status" value="1"/>
</dbReference>
<dbReference type="Pfam" id="PF00330">
    <property type="entry name" value="Aconitase"/>
    <property type="match status" value="1"/>
</dbReference>
<dbReference type="PRINTS" id="PR00415">
    <property type="entry name" value="ACONITASE"/>
</dbReference>
<dbReference type="SUPFAM" id="SSF53732">
    <property type="entry name" value="Aconitase iron-sulfur domain"/>
    <property type="match status" value="1"/>
</dbReference>
<dbReference type="PROSITE" id="PS00450">
    <property type="entry name" value="ACONITASE_1"/>
    <property type="match status" value="1"/>
</dbReference>
<dbReference type="PROSITE" id="PS01244">
    <property type="entry name" value="ACONITASE_2"/>
    <property type="match status" value="1"/>
</dbReference>
<accession>Q7V4U5</accession>
<sequence length="478" mass="50891">MSSGTLYDKVWDLHRVADLPGGSTQLFVGLHLIHEVTSPQAFAALQDKGLPVRCPERTVATVDHIVPTISQKRPFADPLAEEMLSTLERNCANYGIVLCGLGSGRQGIVHVIAPELGLTQPGMTVACGDSHTSTHGAFGAIAFGIGTSQVRDVLASQSLAMNKLKVRRIWVDGQLGSGVYAKDLILHVIRSLGVKAGVGYAYEFAGPAIDVLSMEERMTLCNMAIEGGARCGYVNPDGVTFDYLQGRFYAPTGEALHRAVAWWRSLASDPNAVFDDEVTFDAASIAPMVTWGITPGQGIAVDESVPTADSLEPSERPISEEACRYMDLEPGMAIEGVPVDVCFIGSCTNGRLSDLKAAAAIAKGRHVAQGIKAFVVPGSEQVARAAEAEGLDGVFRKAGFEWREPGCSMCLAMNPDRLEGRQISASSSNRNFKGRQGSSRGRTLLMSPAMVAAAAITGQVTDVRKLISNTVPSKSFHQ</sequence>
<feature type="chain" id="PRO_0000076780" description="3-isopropylmalate dehydratase large subunit">
    <location>
        <begin position="1"/>
        <end position="478"/>
    </location>
</feature>
<feature type="binding site" evidence="1">
    <location>
        <position position="347"/>
    </location>
    <ligand>
        <name>[4Fe-4S] cluster</name>
        <dbReference type="ChEBI" id="CHEBI:49883"/>
    </ligand>
</feature>
<feature type="binding site" evidence="1">
    <location>
        <position position="407"/>
    </location>
    <ligand>
        <name>[4Fe-4S] cluster</name>
        <dbReference type="ChEBI" id="CHEBI:49883"/>
    </ligand>
</feature>
<feature type="binding site" evidence="1">
    <location>
        <position position="410"/>
    </location>
    <ligand>
        <name>[4Fe-4S] cluster</name>
        <dbReference type="ChEBI" id="CHEBI:49883"/>
    </ligand>
</feature>
<protein>
    <recommendedName>
        <fullName evidence="1">3-isopropylmalate dehydratase large subunit</fullName>
        <ecNumber evidence="1">4.2.1.33</ecNumber>
    </recommendedName>
    <alternativeName>
        <fullName evidence="1">Alpha-IPM isomerase</fullName>
        <shortName evidence="1">IPMI</shortName>
    </alternativeName>
    <alternativeName>
        <fullName evidence="1">Isopropylmalate isomerase</fullName>
    </alternativeName>
</protein>
<keyword id="KW-0004">4Fe-4S</keyword>
<keyword id="KW-0028">Amino-acid biosynthesis</keyword>
<keyword id="KW-0100">Branched-chain amino acid biosynthesis</keyword>
<keyword id="KW-0408">Iron</keyword>
<keyword id="KW-0411">Iron-sulfur</keyword>
<keyword id="KW-0432">Leucine biosynthesis</keyword>
<keyword id="KW-0456">Lyase</keyword>
<keyword id="KW-0479">Metal-binding</keyword>
<keyword id="KW-1185">Reference proteome</keyword>
<organism>
    <name type="scientific">Prochlorococcus marinus (strain MIT 9313)</name>
    <dbReference type="NCBI Taxonomy" id="74547"/>
    <lineage>
        <taxon>Bacteria</taxon>
        <taxon>Bacillati</taxon>
        <taxon>Cyanobacteriota</taxon>
        <taxon>Cyanophyceae</taxon>
        <taxon>Synechococcales</taxon>
        <taxon>Prochlorococcaceae</taxon>
        <taxon>Prochlorococcus</taxon>
    </lineage>
</organism>
<comment type="function">
    <text evidence="1">Catalyzes the isomerization between 2-isopropylmalate and 3-isopropylmalate, via the formation of 2-isopropylmaleate.</text>
</comment>
<comment type="catalytic activity">
    <reaction evidence="1">
        <text>(2R,3S)-3-isopropylmalate = (2S)-2-isopropylmalate</text>
        <dbReference type="Rhea" id="RHEA:32287"/>
        <dbReference type="ChEBI" id="CHEBI:1178"/>
        <dbReference type="ChEBI" id="CHEBI:35121"/>
        <dbReference type="EC" id="4.2.1.33"/>
    </reaction>
</comment>
<comment type="cofactor">
    <cofactor evidence="1">
        <name>[4Fe-4S] cluster</name>
        <dbReference type="ChEBI" id="CHEBI:49883"/>
    </cofactor>
    <text evidence="1">Binds 1 [4Fe-4S] cluster per subunit.</text>
</comment>
<comment type="pathway">
    <text evidence="1">Amino-acid biosynthesis; L-leucine biosynthesis; L-leucine from 3-methyl-2-oxobutanoate: step 2/4.</text>
</comment>
<comment type="subunit">
    <text evidence="1">Heterodimer of LeuC and LeuD.</text>
</comment>
<comment type="similarity">
    <text evidence="1">Belongs to the aconitase/IPM isomerase family. LeuC type 1 subfamily.</text>
</comment>
<reference key="1">
    <citation type="journal article" date="2003" name="Nature">
        <title>Genome divergence in two Prochlorococcus ecotypes reflects oceanic niche differentiation.</title>
        <authorList>
            <person name="Rocap G."/>
            <person name="Larimer F.W."/>
            <person name="Lamerdin J.E."/>
            <person name="Malfatti S."/>
            <person name="Chain P."/>
            <person name="Ahlgren N.A."/>
            <person name="Arellano A."/>
            <person name="Coleman M."/>
            <person name="Hauser L."/>
            <person name="Hess W.R."/>
            <person name="Johnson Z.I."/>
            <person name="Land M.L."/>
            <person name="Lindell D."/>
            <person name="Post A.F."/>
            <person name="Regala W."/>
            <person name="Shah M."/>
            <person name="Shaw S.L."/>
            <person name="Steglich C."/>
            <person name="Sullivan M.B."/>
            <person name="Ting C.S."/>
            <person name="Tolonen A."/>
            <person name="Webb E.A."/>
            <person name="Zinser E.R."/>
            <person name="Chisholm S.W."/>
        </authorList>
    </citation>
    <scope>NUCLEOTIDE SEQUENCE [LARGE SCALE GENOMIC DNA]</scope>
    <source>
        <strain>MIT 9313</strain>
    </source>
</reference>
<evidence type="ECO:0000255" key="1">
    <source>
        <dbReference type="HAMAP-Rule" id="MF_01026"/>
    </source>
</evidence>